<keyword id="KW-0507">mRNA processing</keyword>
<keyword id="KW-0508">mRNA splicing</keyword>
<keyword id="KW-0539">Nucleus</keyword>
<keyword id="KW-0597">Phosphoprotein</keyword>
<keyword id="KW-1185">Reference proteome</keyword>
<keyword id="KW-0694">RNA-binding</keyword>
<gene>
    <name type="primary">AFF2</name>
</gene>
<comment type="function">
    <text evidence="1">RNA-binding protein. Might be involved in alternative splicing regulation through an interaction with G-quartet RNA structure (By similarity).</text>
</comment>
<comment type="subcellular location">
    <subcellularLocation>
        <location evidence="1">Nucleus speckle</location>
    </subcellularLocation>
</comment>
<comment type="similarity">
    <text evidence="4">Belongs to the AF4 family.</text>
</comment>
<organism>
    <name type="scientific">Pan troglodytes</name>
    <name type="common">Chimpanzee</name>
    <dbReference type="NCBI Taxonomy" id="9598"/>
    <lineage>
        <taxon>Eukaryota</taxon>
        <taxon>Metazoa</taxon>
        <taxon>Chordata</taxon>
        <taxon>Craniata</taxon>
        <taxon>Vertebrata</taxon>
        <taxon>Euteleostomi</taxon>
        <taxon>Mammalia</taxon>
        <taxon>Eutheria</taxon>
        <taxon>Euarchontoglires</taxon>
        <taxon>Primates</taxon>
        <taxon>Haplorrhini</taxon>
        <taxon>Catarrhini</taxon>
        <taxon>Hominidae</taxon>
        <taxon>Pan</taxon>
    </lineage>
</organism>
<proteinExistence type="evidence at transcript level"/>
<accession>Q7YQM2</accession>
<dbReference type="EMBL" id="AB102645">
    <property type="protein sequence ID" value="BAC81114.1"/>
    <property type="molecule type" value="mRNA"/>
</dbReference>
<dbReference type="RefSeq" id="NP_001009042.1">
    <property type="nucleotide sequence ID" value="NM_001009042.1"/>
</dbReference>
<dbReference type="SMR" id="Q7YQM2"/>
<dbReference type="FunCoup" id="Q7YQM2">
    <property type="interactions" value="164"/>
</dbReference>
<dbReference type="STRING" id="9598.ENSPTRP00000064370"/>
<dbReference type="PaxDb" id="9598-ENSPTRP00000054451"/>
<dbReference type="Ensembl" id="ENSPTRT00000061907.2">
    <property type="protein sequence ID" value="ENSPTRP00000054451.2"/>
    <property type="gene ID" value="ENSPTRG00000022353.7"/>
</dbReference>
<dbReference type="GeneID" id="450122"/>
<dbReference type="KEGG" id="ptr:450122"/>
<dbReference type="CTD" id="2334"/>
<dbReference type="VGNC" id="VGNC:6427">
    <property type="gene designation" value="AFF2"/>
</dbReference>
<dbReference type="eggNOG" id="ENOG502QR32">
    <property type="taxonomic scope" value="Eukaryota"/>
</dbReference>
<dbReference type="GeneTree" id="ENSGT00950000182974"/>
<dbReference type="InParanoid" id="Q7YQM2"/>
<dbReference type="OMA" id="SMELPDP"/>
<dbReference type="Proteomes" id="UP000002277">
    <property type="component" value="Chromosome X"/>
</dbReference>
<dbReference type="Bgee" id="ENSPTRG00000022353">
    <property type="expression patterns" value="Expressed in pituitary gland and 13 other cell types or tissues"/>
</dbReference>
<dbReference type="GO" id="GO:0016607">
    <property type="term" value="C:nuclear speck"/>
    <property type="evidence" value="ECO:0000250"/>
    <property type="project" value="UniProtKB"/>
</dbReference>
<dbReference type="GO" id="GO:0002151">
    <property type="term" value="F:G-quadruplex RNA binding"/>
    <property type="evidence" value="ECO:0000250"/>
    <property type="project" value="UniProtKB"/>
</dbReference>
<dbReference type="GO" id="GO:0006397">
    <property type="term" value="P:mRNA processing"/>
    <property type="evidence" value="ECO:0007669"/>
    <property type="project" value="UniProtKB-KW"/>
</dbReference>
<dbReference type="GO" id="GO:0043484">
    <property type="term" value="P:regulation of RNA splicing"/>
    <property type="evidence" value="ECO:0000250"/>
    <property type="project" value="UniProtKB"/>
</dbReference>
<dbReference type="GO" id="GO:0008380">
    <property type="term" value="P:RNA splicing"/>
    <property type="evidence" value="ECO:0007669"/>
    <property type="project" value="UniProtKB-KW"/>
</dbReference>
<dbReference type="Gene3D" id="6.10.250.2670">
    <property type="match status" value="1"/>
</dbReference>
<dbReference type="InterPro" id="IPR007797">
    <property type="entry name" value="AF4/FMR2"/>
</dbReference>
<dbReference type="InterPro" id="IPR043640">
    <property type="entry name" value="AF4/FMR2_CHD"/>
</dbReference>
<dbReference type="InterPro" id="IPR043639">
    <property type="entry name" value="AF4_int"/>
</dbReference>
<dbReference type="PANTHER" id="PTHR10528">
    <property type="entry name" value="AF4/FMR2 FAMILY MEMBER"/>
    <property type="match status" value="1"/>
</dbReference>
<dbReference type="PANTHER" id="PTHR10528:SF18">
    <property type="entry name" value="AF4_FMR2 FAMILY MEMBER 2"/>
    <property type="match status" value="1"/>
</dbReference>
<dbReference type="Pfam" id="PF05110">
    <property type="entry name" value="AF-4"/>
    <property type="match status" value="2"/>
</dbReference>
<dbReference type="Pfam" id="PF18875">
    <property type="entry name" value="AF4_int"/>
    <property type="match status" value="1"/>
</dbReference>
<dbReference type="Pfam" id="PF18876">
    <property type="entry name" value="AFF4_CHD"/>
    <property type="match status" value="1"/>
</dbReference>
<protein>
    <recommendedName>
        <fullName>AF4/FMR2 family member 2</fullName>
    </recommendedName>
</protein>
<evidence type="ECO:0000250" key="1"/>
<evidence type="ECO:0000250" key="2">
    <source>
        <dbReference type="UniProtKB" id="P51816"/>
    </source>
</evidence>
<evidence type="ECO:0000256" key="3">
    <source>
        <dbReference type="SAM" id="MobiDB-lite"/>
    </source>
</evidence>
<evidence type="ECO:0000305" key="4"/>
<feature type="chain" id="PRO_0000215914" description="AF4/FMR2 family member 2">
    <location>
        <begin position="1"/>
        <end position="1272"/>
    </location>
</feature>
<feature type="region of interest" description="Disordered" evidence="3">
    <location>
        <begin position="93"/>
        <end position="183"/>
    </location>
</feature>
<feature type="region of interest" description="Disordered" evidence="3">
    <location>
        <begin position="201"/>
        <end position="225"/>
    </location>
</feature>
<feature type="region of interest" description="Disordered" evidence="3">
    <location>
        <begin position="283"/>
        <end position="302"/>
    </location>
</feature>
<feature type="region of interest" description="Disordered" evidence="3">
    <location>
        <begin position="418"/>
        <end position="491"/>
    </location>
</feature>
<feature type="region of interest" description="Disordered" evidence="3">
    <location>
        <begin position="535"/>
        <end position="687"/>
    </location>
</feature>
<feature type="region of interest" description="Disordered" evidence="3">
    <location>
        <begin position="779"/>
        <end position="829"/>
    </location>
</feature>
<feature type="region of interest" description="Disordered" evidence="3">
    <location>
        <begin position="842"/>
        <end position="903"/>
    </location>
</feature>
<feature type="compositionally biased region" description="Polar residues" evidence="3">
    <location>
        <begin position="97"/>
        <end position="107"/>
    </location>
</feature>
<feature type="compositionally biased region" description="Basic and acidic residues" evidence="3">
    <location>
        <begin position="151"/>
        <end position="160"/>
    </location>
</feature>
<feature type="compositionally biased region" description="Polar residues" evidence="3">
    <location>
        <begin position="161"/>
        <end position="183"/>
    </location>
</feature>
<feature type="compositionally biased region" description="Pro residues" evidence="3">
    <location>
        <begin position="426"/>
        <end position="438"/>
    </location>
</feature>
<feature type="compositionally biased region" description="Low complexity" evidence="3">
    <location>
        <begin position="439"/>
        <end position="452"/>
    </location>
</feature>
<feature type="compositionally biased region" description="Basic and acidic residues" evidence="3">
    <location>
        <begin position="543"/>
        <end position="558"/>
    </location>
</feature>
<feature type="compositionally biased region" description="Polar residues" evidence="3">
    <location>
        <begin position="576"/>
        <end position="586"/>
    </location>
</feature>
<feature type="compositionally biased region" description="Basic and acidic residues" evidence="3">
    <location>
        <begin position="616"/>
        <end position="629"/>
    </location>
</feature>
<feature type="compositionally biased region" description="Basic residues" evidence="3">
    <location>
        <begin position="630"/>
        <end position="640"/>
    </location>
</feature>
<feature type="compositionally biased region" description="Basic and acidic residues" evidence="3">
    <location>
        <begin position="818"/>
        <end position="829"/>
    </location>
</feature>
<feature type="compositionally biased region" description="Pro residues" evidence="3">
    <location>
        <begin position="844"/>
        <end position="853"/>
    </location>
</feature>
<feature type="compositionally biased region" description="Pro residues" evidence="3">
    <location>
        <begin position="874"/>
        <end position="883"/>
    </location>
</feature>
<feature type="modified residue" description="Phosphoserine" evidence="2">
    <location>
        <position position="391"/>
    </location>
</feature>
<feature type="modified residue" description="Phosphothreonine" evidence="2">
    <location>
        <position position="478"/>
    </location>
</feature>
<reference key="1">
    <citation type="journal article" date="2003" name="Mol. Biol. Evol.">
        <title>Gene diversity patterns at 10 X-chromosomal loci in humans and chimpanzees.</title>
        <authorList>
            <person name="Kitano T."/>
            <person name="Schwarz C."/>
            <person name="Nickel B."/>
            <person name="Paeaebo S."/>
        </authorList>
    </citation>
    <scope>NUCLEOTIDE SEQUENCE [MRNA]</scope>
</reference>
<name>AFF2_PANTR</name>
<sequence length="1272" mass="140509">MDLFDFFRDWDLEQQCHYEQDRSALKKREWERRNQEVQQEDDLFSSGFDLFGEPYKTNKGDALANRVQNTLGNYDEMKDLLTNHSNQNHLVGIPKNSVPQNPNNKNEPSFFPEQKNRIIPPHQDNTHPSAPMPPPSVVILNSTLIHSNRKSKPEWSRDSHNPSTVLASQASGQPNKMQTLTQDQSQAKLEDFFVYPAEQPQIGEAEESNPSAKEDSNPNSSGEDAFKEIFQSNSPEESEFAVQAPGSPLVASSLLAPSSGLSVQNFPPGLYCKTSMGQQKPTAYVRPMDGQDQAPDISPTLKPSIEFENSFGNLSFGTLLDGKPSAASSKTKLPKFTILQTSEVSLPSDPSCVEEILRESQHLTPGFTLQKWNDPTTRASTKMLEDDLKLSSDEDDLEPVKTLTTQCTATELYQAVEKAKPRNNPVNPPLATPQPPPAVQASGGSGSSSESESSSESDSDTESSTTDSESNEAPRVATPEPEPPSTNKWQLDKWLNKVTSQNKSFICGQNETPMETISLPPPIIQPMEVQMKVKTNASQVPAEPKERPLLSLIREKARPRPTQKIPETKALKHKLSTTSETVSQRTIGKKQPKKVEKNTSIDEFTWPKPNITSSTPKEKESVELHDPPRGRNKATAHKPAPRKEPRPNIPLAPEKKKYRGPGKIVPKSREFIETDSSTSDSNTDQEETLQIKVLPPCIISGGNTAKSKEICGASLTLSTLMSSSGSNNNLSISNEEPTFSPIPVMQTEMLSPLRDHENLKNLWVKIDLDLLSRVPGHNSLHAAPAKPDHKETATKPKRQTALTAVEKPAPKGKRKHKPTEVAEKIPEKKQRLEEATTICLLPPCISPAPPHKPPNTRENNSSRRANRRKEEKLFPPPLSPLPEDPPRRRNVSGNNGPFGQDKNIAMTGQITSTKPKRTEGKFCATFKGISVNEGDTPKKASSATITVTNTAIATATVTATAIVTTTVTATATATATTTTTTTTISTITSTITTGLMDSSHLEMTSWAALPLLSSSSTNVRRPKLTFDDSVHNADYYMQEAKKLKHKADALFEKFGKAVNYADAALSFTECGNAMERDPLEAKSPYTMYSETVELLRYAMRLKNFASPLASDGDKKLAVLCYRCLSLLYLRMFKLKKDHAMKYSRSLMEYFKQNASKVAQIPSPWVGNGKNTPSPVSLNNVSPINAMGNCNNGPVTIPQRIHHMAASHVNITSNVLRGYEHWDMADKLTRENKEFFGDLDTLMGPLTQHSSMTNLVRYVRQGLCWLRIDAHLL</sequence>